<reference key="1">
    <citation type="journal article" date="2009" name="PLoS Genet.">
        <title>Organised genome dynamics in the Escherichia coli species results in highly diverse adaptive paths.</title>
        <authorList>
            <person name="Touchon M."/>
            <person name="Hoede C."/>
            <person name="Tenaillon O."/>
            <person name="Barbe V."/>
            <person name="Baeriswyl S."/>
            <person name="Bidet P."/>
            <person name="Bingen E."/>
            <person name="Bonacorsi S."/>
            <person name="Bouchier C."/>
            <person name="Bouvet O."/>
            <person name="Calteau A."/>
            <person name="Chiapello H."/>
            <person name="Clermont O."/>
            <person name="Cruveiller S."/>
            <person name="Danchin A."/>
            <person name="Diard M."/>
            <person name="Dossat C."/>
            <person name="Karoui M.E."/>
            <person name="Frapy E."/>
            <person name="Garry L."/>
            <person name="Ghigo J.M."/>
            <person name="Gilles A.M."/>
            <person name="Johnson J."/>
            <person name="Le Bouguenec C."/>
            <person name="Lescat M."/>
            <person name="Mangenot S."/>
            <person name="Martinez-Jehanne V."/>
            <person name="Matic I."/>
            <person name="Nassif X."/>
            <person name="Oztas S."/>
            <person name="Petit M.A."/>
            <person name="Pichon C."/>
            <person name="Rouy Z."/>
            <person name="Ruf C.S."/>
            <person name="Schneider D."/>
            <person name="Tourret J."/>
            <person name="Vacherie B."/>
            <person name="Vallenet D."/>
            <person name="Medigue C."/>
            <person name="Rocha E.P.C."/>
            <person name="Denamur E."/>
        </authorList>
    </citation>
    <scope>NUCLEOTIDE SEQUENCE [LARGE SCALE GENOMIC DNA]</scope>
    <source>
        <strain>ED1a</strain>
    </source>
</reference>
<organism>
    <name type="scientific">Escherichia coli O81 (strain ED1a)</name>
    <dbReference type="NCBI Taxonomy" id="585397"/>
    <lineage>
        <taxon>Bacteria</taxon>
        <taxon>Pseudomonadati</taxon>
        <taxon>Pseudomonadota</taxon>
        <taxon>Gammaproteobacteria</taxon>
        <taxon>Enterobacterales</taxon>
        <taxon>Enterobacteriaceae</taxon>
        <taxon>Escherichia</taxon>
    </lineage>
</organism>
<sequence length="110" mass="12226">METIAKHRHARSSAQKVRLVADLIRGKKVSQALDILTYTNKKAAVLVKKVLESAIANAEHNDGADIDDLKVTKIFVDEGPSMKRIMPRAKGRADRILKRTSHITVVVSDR</sequence>
<evidence type="ECO:0000255" key="1">
    <source>
        <dbReference type="HAMAP-Rule" id="MF_01331"/>
    </source>
</evidence>
<evidence type="ECO:0000305" key="2"/>
<accession>B7N199</accession>
<proteinExistence type="inferred from homology"/>
<feature type="chain" id="PRO_1000166062" description="Large ribosomal subunit protein uL22">
    <location>
        <begin position="1"/>
        <end position="110"/>
    </location>
</feature>
<protein>
    <recommendedName>
        <fullName evidence="1">Large ribosomal subunit protein uL22</fullName>
    </recommendedName>
    <alternativeName>
        <fullName evidence="2">50S ribosomal protein L22</fullName>
    </alternativeName>
</protein>
<gene>
    <name evidence="1" type="primary">rplV</name>
    <name type="ordered locus">ECED1_3978</name>
</gene>
<name>RL22_ECO81</name>
<comment type="function">
    <text evidence="1">This protein binds specifically to 23S rRNA; its binding is stimulated by other ribosomal proteins, e.g. L4, L17, and L20. It is important during the early stages of 50S assembly. It makes multiple contacts with different domains of the 23S rRNA in the assembled 50S subunit and ribosome (By similarity).</text>
</comment>
<comment type="function">
    <text evidence="1">The globular domain of the protein is located near the polypeptide exit tunnel on the outside of the subunit, while an extended beta-hairpin is found that lines the wall of the exit tunnel in the center of the 70S ribosome.</text>
</comment>
<comment type="subunit">
    <text evidence="1">Part of the 50S ribosomal subunit.</text>
</comment>
<comment type="similarity">
    <text evidence="1">Belongs to the universal ribosomal protein uL22 family.</text>
</comment>
<keyword id="KW-0687">Ribonucleoprotein</keyword>
<keyword id="KW-0689">Ribosomal protein</keyword>
<keyword id="KW-0694">RNA-binding</keyword>
<keyword id="KW-0699">rRNA-binding</keyword>
<dbReference type="EMBL" id="CU928162">
    <property type="protein sequence ID" value="CAR10117.2"/>
    <property type="molecule type" value="Genomic_DNA"/>
</dbReference>
<dbReference type="RefSeq" id="WP_000447529.1">
    <property type="nucleotide sequence ID" value="NC_011745.1"/>
</dbReference>
<dbReference type="SMR" id="B7N199"/>
<dbReference type="GeneID" id="93778672"/>
<dbReference type="KEGG" id="ecq:ECED1_3978"/>
<dbReference type="HOGENOM" id="CLU_083987_3_3_6"/>
<dbReference type="Proteomes" id="UP000000748">
    <property type="component" value="Chromosome"/>
</dbReference>
<dbReference type="GO" id="GO:0022625">
    <property type="term" value="C:cytosolic large ribosomal subunit"/>
    <property type="evidence" value="ECO:0007669"/>
    <property type="project" value="TreeGrafter"/>
</dbReference>
<dbReference type="GO" id="GO:0019843">
    <property type="term" value="F:rRNA binding"/>
    <property type="evidence" value="ECO:0007669"/>
    <property type="project" value="UniProtKB-UniRule"/>
</dbReference>
<dbReference type="GO" id="GO:0003735">
    <property type="term" value="F:structural constituent of ribosome"/>
    <property type="evidence" value="ECO:0007669"/>
    <property type="project" value="InterPro"/>
</dbReference>
<dbReference type="GO" id="GO:0006412">
    <property type="term" value="P:translation"/>
    <property type="evidence" value="ECO:0007669"/>
    <property type="project" value="UniProtKB-UniRule"/>
</dbReference>
<dbReference type="CDD" id="cd00336">
    <property type="entry name" value="Ribosomal_L22"/>
    <property type="match status" value="1"/>
</dbReference>
<dbReference type="FunFam" id="3.90.470.10:FF:000001">
    <property type="entry name" value="50S ribosomal protein L22"/>
    <property type="match status" value="1"/>
</dbReference>
<dbReference type="Gene3D" id="3.90.470.10">
    <property type="entry name" value="Ribosomal protein L22/L17"/>
    <property type="match status" value="1"/>
</dbReference>
<dbReference type="HAMAP" id="MF_01331_B">
    <property type="entry name" value="Ribosomal_uL22_B"/>
    <property type="match status" value="1"/>
</dbReference>
<dbReference type="InterPro" id="IPR001063">
    <property type="entry name" value="Ribosomal_uL22"/>
</dbReference>
<dbReference type="InterPro" id="IPR005727">
    <property type="entry name" value="Ribosomal_uL22_bac/chlpt-type"/>
</dbReference>
<dbReference type="InterPro" id="IPR047867">
    <property type="entry name" value="Ribosomal_uL22_bac/org-type"/>
</dbReference>
<dbReference type="InterPro" id="IPR018260">
    <property type="entry name" value="Ribosomal_uL22_CS"/>
</dbReference>
<dbReference type="InterPro" id="IPR036394">
    <property type="entry name" value="Ribosomal_uL22_sf"/>
</dbReference>
<dbReference type="NCBIfam" id="TIGR01044">
    <property type="entry name" value="rplV_bact"/>
    <property type="match status" value="1"/>
</dbReference>
<dbReference type="PANTHER" id="PTHR13501">
    <property type="entry name" value="CHLOROPLAST 50S RIBOSOMAL PROTEIN L22-RELATED"/>
    <property type="match status" value="1"/>
</dbReference>
<dbReference type="PANTHER" id="PTHR13501:SF8">
    <property type="entry name" value="LARGE RIBOSOMAL SUBUNIT PROTEIN UL22M"/>
    <property type="match status" value="1"/>
</dbReference>
<dbReference type="Pfam" id="PF00237">
    <property type="entry name" value="Ribosomal_L22"/>
    <property type="match status" value="1"/>
</dbReference>
<dbReference type="SUPFAM" id="SSF54843">
    <property type="entry name" value="Ribosomal protein L22"/>
    <property type="match status" value="1"/>
</dbReference>
<dbReference type="PROSITE" id="PS00464">
    <property type="entry name" value="RIBOSOMAL_L22"/>
    <property type="match status" value="1"/>
</dbReference>